<proteinExistence type="inferred from homology"/>
<evidence type="ECO:0000255" key="1">
    <source>
        <dbReference type="HAMAP-Rule" id="MF_00412"/>
    </source>
</evidence>
<keyword id="KW-0028">Amino-acid biosynthesis</keyword>
<keyword id="KW-0963">Cytoplasm</keyword>
<keyword id="KW-0521">NADP</keyword>
<keyword id="KW-0560">Oxidoreductase</keyword>
<keyword id="KW-0641">Proline biosynthesis</keyword>
<keyword id="KW-1185">Reference proteome</keyword>
<reference key="1">
    <citation type="journal article" date="2006" name="BMC Genomics">
        <title>The genome of the square archaeon Haloquadratum walsbyi: life at the limits of water activity.</title>
        <authorList>
            <person name="Bolhuis H."/>
            <person name="Palm P."/>
            <person name="Wende A."/>
            <person name="Falb M."/>
            <person name="Rampp M."/>
            <person name="Rodriguez-Valera F."/>
            <person name="Pfeiffer F."/>
            <person name="Oesterhelt D."/>
        </authorList>
    </citation>
    <scope>NUCLEOTIDE SEQUENCE [LARGE SCALE GENOMIC DNA]</scope>
    <source>
        <strain>DSM 16790 / HBSQ001</strain>
    </source>
</reference>
<sequence>MTDSGEIDPQTAEEKVTDAQTAALSLSNLSTARRNEALTAIADTIERNVDRILEANAADVADAEKQVDAGEYTQAFVDRLTLSTSKIESIAEMVRSVAEQDDPLGETLTARELDDDLNLYKVTVPIGVIGTVFESRPDALVQISALSLKSGNAVILKGGSEAERSNRVLYNCILEATPEVPSGWAQLIEAREDVQTLLEMDDAVDLIMPRGSSSFVQYVQDNTSIPVLGHTEGVCHVYVDSEADLEMATAVAYDAKVQYPAVCNAVETLLVHESVAPSFLSQMMKQYRDAGVEIRGDERTQSIVDTESNISEEIIAATEADWTTEYGDRIVSIAVVDSLTDAIDHINMYGSKHTESILTQDDNRAEQFMRAVDAASVFHNASTRFADGFRFGLGAEVGISTGKIHARGPVGLDGLTTYKYHLEGDGQQVATYAGSDAKPFDHAEFDETWPVRNDDG</sequence>
<comment type="function">
    <text evidence="1">Catalyzes the NADPH-dependent reduction of L-glutamate 5-phosphate into L-glutamate 5-semialdehyde and phosphate. The product spontaneously undergoes cyclization to form 1-pyrroline-5-carboxylate.</text>
</comment>
<comment type="catalytic activity">
    <reaction evidence="1">
        <text>L-glutamate 5-semialdehyde + phosphate + NADP(+) = L-glutamyl 5-phosphate + NADPH + H(+)</text>
        <dbReference type="Rhea" id="RHEA:19541"/>
        <dbReference type="ChEBI" id="CHEBI:15378"/>
        <dbReference type="ChEBI" id="CHEBI:43474"/>
        <dbReference type="ChEBI" id="CHEBI:57783"/>
        <dbReference type="ChEBI" id="CHEBI:58066"/>
        <dbReference type="ChEBI" id="CHEBI:58274"/>
        <dbReference type="ChEBI" id="CHEBI:58349"/>
        <dbReference type="EC" id="1.2.1.41"/>
    </reaction>
</comment>
<comment type="pathway">
    <text evidence="1">Amino-acid biosynthesis; L-proline biosynthesis; L-glutamate 5-semialdehyde from L-glutamate: step 2/2.</text>
</comment>
<comment type="subcellular location">
    <subcellularLocation>
        <location evidence="1">Cytoplasm</location>
    </subcellularLocation>
</comment>
<comment type="similarity">
    <text evidence="1">Belongs to the gamma-glutamyl phosphate reductase family.</text>
</comment>
<organism>
    <name type="scientific">Haloquadratum walsbyi (strain DSM 16790 / HBSQ001)</name>
    <dbReference type="NCBI Taxonomy" id="362976"/>
    <lineage>
        <taxon>Archaea</taxon>
        <taxon>Methanobacteriati</taxon>
        <taxon>Methanobacteriota</taxon>
        <taxon>Stenosarchaea group</taxon>
        <taxon>Halobacteria</taxon>
        <taxon>Halobacteriales</taxon>
        <taxon>Haloferacaceae</taxon>
        <taxon>Haloquadratum</taxon>
    </lineage>
</organism>
<feature type="chain" id="PRO_0000252604" description="Gamma-glutamyl phosphate reductase">
    <location>
        <begin position="1"/>
        <end position="456"/>
    </location>
</feature>
<name>PROA_HALWD</name>
<dbReference type="EC" id="1.2.1.41" evidence="1"/>
<dbReference type="EMBL" id="AM180088">
    <property type="protein sequence ID" value="CAJ51972.2"/>
    <property type="molecule type" value="Genomic_DNA"/>
</dbReference>
<dbReference type="RefSeq" id="WP_048066971.1">
    <property type="nucleotide sequence ID" value="NC_008212.1"/>
</dbReference>
<dbReference type="SMR" id="Q18J39"/>
<dbReference type="STRING" id="362976.HQ_1844A"/>
<dbReference type="GeneID" id="4194506"/>
<dbReference type="KEGG" id="hwa:HQ_1844A"/>
<dbReference type="eggNOG" id="arCOG01253">
    <property type="taxonomic scope" value="Archaea"/>
</dbReference>
<dbReference type="HOGENOM" id="CLU_030231_0_0_2"/>
<dbReference type="UniPathway" id="UPA00098">
    <property type="reaction ID" value="UER00360"/>
</dbReference>
<dbReference type="Proteomes" id="UP000001975">
    <property type="component" value="Chromosome"/>
</dbReference>
<dbReference type="GO" id="GO:0005737">
    <property type="term" value="C:cytoplasm"/>
    <property type="evidence" value="ECO:0007669"/>
    <property type="project" value="UniProtKB-SubCell"/>
</dbReference>
<dbReference type="GO" id="GO:0004350">
    <property type="term" value="F:glutamate-5-semialdehyde dehydrogenase activity"/>
    <property type="evidence" value="ECO:0007669"/>
    <property type="project" value="UniProtKB-UniRule"/>
</dbReference>
<dbReference type="GO" id="GO:0050661">
    <property type="term" value="F:NADP binding"/>
    <property type="evidence" value="ECO:0007669"/>
    <property type="project" value="InterPro"/>
</dbReference>
<dbReference type="GO" id="GO:0055129">
    <property type="term" value="P:L-proline biosynthetic process"/>
    <property type="evidence" value="ECO:0007669"/>
    <property type="project" value="UniProtKB-UniRule"/>
</dbReference>
<dbReference type="CDD" id="cd07079">
    <property type="entry name" value="ALDH_F18-19_ProA-GPR"/>
    <property type="match status" value="1"/>
</dbReference>
<dbReference type="FunFam" id="3.40.309.10:FF:000006">
    <property type="entry name" value="Gamma-glutamyl phosphate reductase"/>
    <property type="match status" value="1"/>
</dbReference>
<dbReference type="Gene3D" id="3.40.605.10">
    <property type="entry name" value="Aldehyde Dehydrogenase, Chain A, domain 1"/>
    <property type="match status" value="1"/>
</dbReference>
<dbReference type="Gene3D" id="3.40.309.10">
    <property type="entry name" value="Aldehyde Dehydrogenase, Chain A, domain 2"/>
    <property type="match status" value="1"/>
</dbReference>
<dbReference type="HAMAP" id="MF_00412">
    <property type="entry name" value="ProA"/>
    <property type="match status" value="1"/>
</dbReference>
<dbReference type="InterPro" id="IPR016161">
    <property type="entry name" value="Ald_DH/histidinol_DH"/>
</dbReference>
<dbReference type="InterPro" id="IPR016163">
    <property type="entry name" value="Ald_DH_C"/>
</dbReference>
<dbReference type="InterPro" id="IPR016162">
    <property type="entry name" value="Ald_DH_N"/>
</dbReference>
<dbReference type="InterPro" id="IPR015590">
    <property type="entry name" value="Aldehyde_DH_dom"/>
</dbReference>
<dbReference type="InterPro" id="IPR020593">
    <property type="entry name" value="G-glutamylP_reductase_CS"/>
</dbReference>
<dbReference type="InterPro" id="IPR012134">
    <property type="entry name" value="Glu-5-SA_DH"/>
</dbReference>
<dbReference type="InterPro" id="IPR000965">
    <property type="entry name" value="GPR_dom"/>
</dbReference>
<dbReference type="NCBIfam" id="NF001221">
    <property type="entry name" value="PRK00197.1"/>
    <property type="match status" value="1"/>
</dbReference>
<dbReference type="NCBIfam" id="TIGR00407">
    <property type="entry name" value="proA"/>
    <property type="match status" value="1"/>
</dbReference>
<dbReference type="PANTHER" id="PTHR11063:SF8">
    <property type="entry name" value="DELTA-1-PYRROLINE-5-CARBOXYLATE SYNTHASE"/>
    <property type="match status" value="1"/>
</dbReference>
<dbReference type="PANTHER" id="PTHR11063">
    <property type="entry name" value="GLUTAMATE SEMIALDEHYDE DEHYDROGENASE"/>
    <property type="match status" value="1"/>
</dbReference>
<dbReference type="Pfam" id="PF00171">
    <property type="entry name" value="Aldedh"/>
    <property type="match status" value="1"/>
</dbReference>
<dbReference type="PIRSF" id="PIRSF000151">
    <property type="entry name" value="GPR"/>
    <property type="match status" value="1"/>
</dbReference>
<dbReference type="SUPFAM" id="SSF53720">
    <property type="entry name" value="ALDH-like"/>
    <property type="match status" value="1"/>
</dbReference>
<dbReference type="PROSITE" id="PS01223">
    <property type="entry name" value="PROA"/>
    <property type="match status" value="1"/>
</dbReference>
<accession>Q18J39</accession>
<protein>
    <recommendedName>
        <fullName evidence="1">Gamma-glutamyl phosphate reductase</fullName>
        <shortName evidence="1">GPR</shortName>
        <ecNumber evidence="1">1.2.1.41</ecNumber>
    </recommendedName>
    <alternativeName>
        <fullName evidence="1">Glutamate-5-semialdehyde dehydrogenase</fullName>
    </alternativeName>
    <alternativeName>
        <fullName evidence="1">Glutamyl-gamma-semialdehyde dehydrogenase</fullName>
        <shortName evidence="1">GSA dehydrogenase</shortName>
    </alternativeName>
</protein>
<gene>
    <name evidence="1" type="primary">proA</name>
    <name type="ordered locus">HQ_1844A</name>
</gene>